<organism>
    <name type="scientific">Acidithiobacillus ferrooxidans (strain ATCC 23270 / DSM 14882 / CIP 104768 / NCIMB 8455)</name>
    <name type="common">Ferrobacillus ferrooxidans (strain ATCC 23270)</name>
    <dbReference type="NCBI Taxonomy" id="243159"/>
    <lineage>
        <taxon>Bacteria</taxon>
        <taxon>Pseudomonadati</taxon>
        <taxon>Pseudomonadota</taxon>
        <taxon>Acidithiobacillia</taxon>
        <taxon>Acidithiobacillales</taxon>
        <taxon>Acidithiobacillaceae</taxon>
        <taxon>Acidithiobacillus</taxon>
    </lineage>
</organism>
<proteinExistence type="inferred from homology"/>
<gene>
    <name evidence="1" type="primary">pdxA</name>
    <name type="ordered locus">AFE_0165</name>
</gene>
<evidence type="ECO:0000255" key="1">
    <source>
        <dbReference type="HAMAP-Rule" id="MF_00536"/>
    </source>
</evidence>
<comment type="function">
    <text evidence="1">Catalyzes the NAD(P)-dependent oxidation of 4-(phosphooxy)-L-threonine (HTP) into 2-amino-3-oxo-4-(phosphooxy)butyric acid which spontaneously decarboxylates to form 3-amino-2-oxopropyl phosphate (AHAP).</text>
</comment>
<comment type="catalytic activity">
    <reaction evidence="1">
        <text>4-(phosphooxy)-L-threonine + NAD(+) = 3-amino-2-oxopropyl phosphate + CO2 + NADH</text>
        <dbReference type="Rhea" id="RHEA:32275"/>
        <dbReference type="ChEBI" id="CHEBI:16526"/>
        <dbReference type="ChEBI" id="CHEBI:57279"/>
        <dbReference type="ChEBI" id="CHEBI:57540"/>
        <dbReference type="ChEBI" id="CHEBI:57945"/>
        <dbReference type="ChEBI" id="CHEBI:58452"/>
        <dbReference type="EC" id="1.1.1.262"/>
    </reaction>
</comment>
<comment type="cofactor">
    <cofactor evidence="1">
        <name>Zn(2+)</name>
        <dbReference type="ChEBI" id="CHEBI:29105"/>
    </cofactor>
    <cofactor evidence="1">
        <name>Mg(2+)</name>
        <dbReference type="ChEBI" id="CHEBI:18420"/>
    </cofactor>
    <cofactor evidence="1">
        <name>Co(2+)</name>
        <dbReference type="ChEBI" id="CHEBI:48828"/>
    </cofactor>
    <text evidence="1">Binds 1 divalent metal cation per subunit. Can use ions such as Zn(2+), Mg(2+) or Co(2+).</text>
</comment>
<comment type="pathway">
    <text evidence="1">Cofactor biosynthesis; pyridoxine 5'-phosphate biosynthesis; pyridoxine 5'-phosphate from D-erythrose 4-phosphate: step 4/5.</text>
</comment>
<comment type="subunit">
    <text evidence="1">Homodimer.</text>
</comment>
<comment type="subcellular location">
    <subcellularLocation>
        <location evidence="1">Cytoplasm</location>
    </subcellularLocation>
</comment>
<comment type="miscellaneous">
    <text evidence="1">The active site is located at the dimer interface.</text>
</comment>
<comment type="similarity">
    <text evidence="1">Belongs to the PdxA family.</text>
</comment>
<sequence length="333" mass="35007">MITEPRLLLTVGEPAGIGPDICLQLAFHALPSGVLLIGDLHCLRSRALTLGLSLRLEPWLEGNPWPALERGVLHVLDVPLAQPCRPGRLDMANAPAVLATLDKAMHLLRAGAADALVTAPVHKGIINDAGIPFTGHTEYLAAACGSPKVVMLLAGRGLRVALATTHLPLAQVAAAVTQEGLEGTLRILHRALREDFALSEPRILVAGLNPHAGEGGHLGHEEQDVIAPVIAALQGESLRISGPWPADTLFTPRLLEDADAVLAMYHDQGLPVLKYHAFGEAVNITLGLPIVRTSVDHGTALDIAGTGRAEGGSLLRALDNAAEIVRNRRAAGC</sequence>
<feature type="chain" id="PRO_1000128234" description="4-hydroxythreonine-4-phosphate dehydrogenase">
    <location>
        <begin position="1"/>
        <end position="333"/>
    </location>
</feature>
<feature type="binding site" evidence="1">
    <location>
        <position position="136"/>
    </location>
    <ligand>
        <name>substrate</name>
    </ligand>
</feature>
<feature type="binding site" evidence="1">
    <location>
        <position position="137"/>
    </location>
    <ligand>
        <name>substrate</name>
    </ligand>
</feature>
<feature type="binding site" evidence="1">
    <location>
        <position position="166"/>
    </location>
    <ligand>
        <name>a divalent metal cation</name>
        <dbReference type="ChEBI" id="CHEBI:60240"/>
        <note>ligand shared between dimeric partners</note>
    </ligand>
</feature>
<feature type="binding site" evidence="1">
    <location>
        <position position="211"/>
    </location>
    <ligand>
        <name>a divalent metal cation</name>
        <dbReference type="ChEBI" id="CHEBI:60240"/>
        <note>ligand shared between dimeric partners</note>
    </ligand>
</feature>
<feature type="binding site" evidence="1">
    <location>
        <position position="266"/>
    </location>
    <ligand>
        <name>a divalent metal cation</name>
        <dbReference type="ChEBI" id="CHEBI:60240"/>
        <note>ligand shared between dimeric partners</note>
    </ligand>
</feature>
<feature type="binding site" evidence="1">
    <location>
        <position position="274"/>
    </location>
    <ligand>
        <name>substrate</name>
    </ligand>
</feature>
<feature type="binding site" evidence="1">
    <location>
        <position position="283"/>
    </location>
    <ligand>
        <name>substrate</name>
    </ligand>
</feature>
<feature type="binding site" evidence="1">
    <location>
        <position position="292"/>
    </location>
    <ligand>
        <name>substrate</name>
    </ligand>
</feature>
<protein>
    <recommendedName>
        <fullName evidence="1">4-hydroxythreonine-4-phosphate dehydrogenase</fullName>
        <ecNumber evidence="1">1.1.1.262</ecNumber>
    </recommendedName>
    <alternativeName>
        <fullName evidence="1">4-(phosphohydroxy)-L-threonine dehydrogenase</fullName>
    </alternativeName>
</protein>
<accession>B7J3R1</accession>
<dbReference type="EC" id="1.1.1.262" evidence="1"/>
<dbReference type="EMBL" id="CP001219">
    <property type="protein sequence ID" value="ACK80626.1"/>
    <property type="molecule type" value="Genomic_DNA"/>
</dbReference>
<dbReference type="RefSeq" id="WP_009563457.1">
    <property type="nucleotide sequence ID" value="NC_011761.1"/>
</dbReference>
<dbReference type="SMR" id="B7J3R1"/>
<dbReference type="STRING" id="243159.AFE_0165"/>
<dbReference type="PaxDb" id="243159-AFE_0165"/>
<dbReference type="GeneID" id="65279550"/>
<dbReference type="KEGG" id="afr:AFE_0165"/>
<dbReference type="eggNOG" id="COG1995">
    <property type="taxonomic scope" value="Bacteria"/>
</dbReference>
<dbReference type="HOGENOM" id="CLU_040168_1_0_6"/>
<dbReference type="UniPathway" id="UPA00244">
    <property type="reaction ID" value="UER00312"/>
</dbReference>
<dbReference type="Proteomes" id="UP000001362">
    <property type="component" value="Chromosome"/>
</dbReference>
<dbReference type="GO" id="GO:0005737">
    <property type="term" value="C:cytoplasm"/>
    <property type="evidence" value="ECO:0007669"/>
    <property type="project" value="UniProtKB-SubCell"/>
</dbReference>
<dbReference type="GO" id="GO:0050570">
    <property type="term" value="F:4-hydroxythreonine-4-phosphate dehydrogenase activity"/>
    <property type="evidence" value="ECO:0007669"/>
    <property type="project" value="UniProtKB-UniRule"/>
</dbReference>
<dbReference type="GO" id="GO:0050897">
    <property type="term" value="F:cobalt ion binding"/>
    <property type="evidence" value="ECO:0007669"/>
    <property type="project" value="UniProtKB-UniRule"/>
</dbReference>
<dbReference type="GO" id="GO:0000287">
    <property type="term" value="F:magnesium ion binding"/>
    <property type="evidence" value="ECO:0007669"/>
    <property type="project" value="UniProtKB-UniRule"/>
</dbReference>
<dbReference type="GO" id="GO:0051287">
    <property type="term" value="F:NAD binding"/>
    <property type="evidence" value="ECO:0007669"/>
    <property type="project" value="InterPro"/>
</dbReference>
<dbReference type="GO" id="GO:0008270">
    <property type="term" value="F:zinc ion binding"/>
    <property type="evidence" value="ECO:0007669"/>
    <property type="project" value="UniProtKB-UniRule"/>
</dbReference>
<dbReference type="GO" id="GO:0042823">
    <property type="term" value="P:pyridoxal phosphate biosynthetic process"/>
    <property type="evidence" value="ECO:0007669"/>
    <property type="project" value="UniProtKB-UniRule"/>
</dbReference>
<dbReference type="GO" id="GO:0008615">
    <property type="term" value="P:pyridoxine biosynthetic process"/>
    <property type="evidence" value="ECO:0007669"/>
    <property type="project" value="UniProtKB-UniRule"/>
</dbReference>
<dbReference type="Gene3D" id="3.40.718.10">
    <property type="entry name" value="Isopropylmalate Dehydrogenase"/>
    <property type="match status" value="1"/>
</dbReference>
<dbReference type="HAMAP" id="MF_00536">
    <property type="entry name" value="PdxA"/>
    <property type="match status" value="1"/>
</dbReference>
<dbReference type="InterPro" id="IPR037510">
    <property type="entry name" value="PdxA"/>
</dbReference>
<dbReference type="InterPro" id="IPR005255">
    <property type="entry name" value="PdxA_fam"/>
</dbReference>
<dbReference type="NCBIfam" id="TIGR00557">
    <property type="entry name" value="pdxA"/>
    <property type="match status" value="1"/>
</dbReference>
<dbReference type="PANTHER" id="PTHR30004">
    <property type="entry name" value="4-HYDROXYTHREONINE-4-PHOSPHATE DEHYDROGENASE"/>
    <property type="match status" value="1"/>
</dbReference>
<dbReference type="PANTHER" id="PTHR30004:SF5">
    <property type="entry name" value="4-HYDROXYTHREONINE-4-PHOSPHATE DEHYDROGENASE"/>
    <property type="match status" value="1"/>
</dbReference>
<dbReference type="Pfam" id="PF04166">
    <property type="entry name" value="PdxA"/>
    <property type="match status" value="1"/>
</dbReference>
<dbReference type="SUPFAM" id="SSF53659">
    <property type="entry name" value="Isocitrate/Isopropylmalate dehydrogenase-like"/>
    <property type="match status" value="1"/>
</dbReference>
<reference key="1">
    <citation type="journal article" date="2008" name="BMC Genomics">
        <title>Acidithiobacillus ferrooxidans metabolism: from genome sequence to industrial applications.</title>
        <authorList>
            <person name="Valdes J."/>
            <person name="Pedroso I."/>
            <person name="Quatrini R."/>
            <person name="Dodson R.J."/>
            <person name="Tettelin H."/>
            <person name="Blake R. II"/>
            <person name="Eisen J.A."/>
            <person name="Holmes D.S."/>
        </authorList>
    </citation>
    <scope>NUCLEOTIDE SEQUENCE [LARGE SCALE GENOMIC DNA]</scope>
    <source>
        <strain>ATCC 23270 / DSM 14882 / CIP 104768 / NCIMB 8455</strain>
    </source>
</reference>
<name>PDXA_ACIF2</name>
<keyword id="KW-0170">Cobalt</keyword>
<keyword id="KW-0963">Cytoplasm</keyword>
<keyword id="KW-0460">Magnesium</keyword>
<keyword id="KW-0479">Metal-binding</keyword>
<keyword id="KW-0520">NAD</keyword>
<keyword id="KW-0521">NADP</keyword>
<keyword id="KW-0560">Oxidoreductase</keyword>
<keyword id="KW-0664">Pyridoxine biosynthesis</keyword>
<keyword id="KW-1185">Reference proteome</keyword>
<keyword id="KW-0862">Zinc</keyword>